<reference key="1">
    <citation type="journal article" date="2008" name="PLoS ONE">
        <title>Environmental adaptation: genomic analysis of the piezotolerant and psychrotolerant deep-sea iron reducing bacterium Shewanella piezotolerans WP3.</title>
        <authorList>
            <person name="Wang F."/>
            <person name="Wang J."/>
            <person name="Jian H."/>
            <person name="Zhang B."/>
            <person name="Li S."/>
            <person name="Wang F."/>
            <person name="Zeng X."/>
            <person name="Gao L."/>
            <person name="Bartlett D.H."/>
            <person name="Yu J."/>
            <person name="Hu S."/>
            <person name="Xiao X."/>
        </authorList>
    </citation>
    <scope>NUCLEOTIDE SEQUENCE [LARGE SCALE GENOMIC DNA]</scope>
    <source>
        <strain>WP3 / JCM 13877</strain>
    </source>
</reference>
<gene>
    <name evidence="1" type="primary">thiG</name>
    <name type="ordered locus">swp_2335</name>
</gene>
<comment type="function">
    <text evidence="1">Catalyzes the rearrangement of 1-deoxy-D-xylulose 5-phosphate (DXP) to produce the thiazole phosphate moiety of thiamine. Sulfur is provided by the thiocarboxylate moiety of the carrier protein ThiS. In vitro, sulfur can be provided by H(2)S.</text>
</comment>
<comment type="catalytic activity">
    <reaction evidence="1">
        <text>[ThiS sulfur-carrier protein]-C-terminal-Gly-aminoethanethioate + 2-iminoacetate + 1-deoxy-D-xylulose 5-phosphate = [ThiS sulfur-carrier protein]-C-terminal Gly-Gly + 2-[(2R,5Z)-2-carboxy-4-methylthiazol-5(2H)-ylidene]ethyl phosphate + 2 H2O + H(+)</text>
        <dbReference type="Rhea" id="RHEA:26297"/>
        <dbReference type="Rhea" id="RHEA-COMP:12909"/>
        <dbReference type="Rhea" id="RHEA-COMP:19908"/>
        <dbReference type="ChEBI" id="CHEBI:15377"/>
        <dbReference type="ChEBI" id="CHEBI:15378"/>
        <dbReference type="ChEBI" id="CHEBI:57792"/>
        <dbReference type="ChEBI" id="CHEBI:62899"/>
        <dbReference type="ChEBI" id="CHEBI:77846"/>
        <dbReference type="ChEBI" id="CHEBI:90778"/>
        <dbReference type="ChEBI" id="CHEBI:232372"/>
        <dbReference type="EC" id="2.8.1.10"/>
    </reaction>
</comment>
<comment type="pathway">
    <text evidence="1">Cofactor biosynthesis; thiamine diphosphate biosynthesis.</text>
</comment>
<comment type="subunit">
    <text evidence="1">Homotetramer. Forms heterodimers with either ThiH or ThiS.</text>
</comment>
<comment type="subcellular location">
    <subcellularLocation>
        <location evidence="1">Cytoplasm</location>
    </subcellularLocation>
</comment>
<comment type="similarity">
    <text evidence="1">Belongs to the ThiG family.</text>
</comment>
<organism>
    <name type="scientific">Shewanella piezotolerans (strain WP3 / JCM 13877)</name>
    <dbReference type="NCBI Taxonomy" id="225849"/>
    <lineage>
        <taxon>Bacteria</taxon>
        <taxon>Pseudomonadati</taxon>
        <taxon>Pseudomonadota</taxon>
        <taxon>Gammaproteobacteria</taxon>
        <taxon>Alteromonadales</taxon>
        <taxon>Shewanellaceae</taxon>
        <taxon>Shewanella</taxon>
    </lineage>
</organism>
<feature type="chain" id="PRO_1000196899" description="Thiazole synthase">
    <location>
        <begin position="1"/>
        <end position="254"/>
    </location>
</feature>
<feature type="active site" description="Schiff-base intermediate with DXP" evidence="1">
    <location>
        <position position="95"/>
    </location>
</feature>
<feature type="binding site" evidence="1">
    <location>
        <position position="156"/>
    </location>
    <ligand>
        <name>1-deoxy-D-xylulose 5-phosphate</name>
        <dbReference type="ChEBI" id="CHEBI:57792"/>
    </ligand>
</feature>
<feature type="binding site" evidence="1">
    <location>
        <begin position="182"/>
        <end position="183"/>
    </location>
    <ligand>
        <name>1-deoxy-D-xylulose 5-phosphate</name>
        <dbReference type="ChEBI" id="CHEBI:57792"/>
    </ligand>
</feature>
<feature type="binding site" evidence="1">
    <location>
        <begin position="204"/>
        <end position="205"/>
    </location>
    <ligand>
        <name>1-deoxy-D-xylulose 5-phosphate</name>
        <dbReference type="ChEBI" id="CHEBI:57792"/>
    </ligand>
</feature>
<protein>
    <recommendedName>
        <fullName evidence="1">Thiazole synthase</fullName>
        <ecNumber evidence="1">2.8.1.10</ecNumber>
    </recommendedName>
</protein>
<proteinExistence type="inferred from homology"/>
<accession>B8CNW1</accession>
<evidence type="ECO:0000255" key="1">
    <source>
        <dbReference type="HAMAP-Rule" id="MF_00443"/>
    </source>
</evidence>
<sequence length="254" mass="26906">MLKIGDTEFTSRLFTGTGKFANDKNMLAAIGASNSELVTLAVKRLDLKTGSDNILKPLQQRRVKLLPNTAGARNVKEAIFAAHLSREMLGTNWIKLEIHPDPKYLMPDPIETLAAARILCEQGYVVLPYVHADPVLCRRLEEVGCAAVMPLGSPIGSNQGLATEPFLKIIIEQSQVPVVIDAGIGAPSQATRAMELGADAVLVNTAIASSADPVAMGRCFAQAVDTGRAAFIAGLGNVSEQANSTSPLTGFLNV</sequence>
<keyword id="KW-0963">Cytoplasm</keyword>
<keyword id="KW-0704">Schiff base</keyword>
<keyword id="KW-0784">Thiamine biosynthesis</keyword>
<keyword id="KW-0808">Transferase</keyword>
<dbReference type="EC" id="2.8.1.10" evidence="1"/>
<dbReference type="EMBL" id="CP000472">
    <property type="protein sequence ID" value="ACJ29080.1"/>
    <property type="molecule type" value="Genomic_DNA"/>
</dbReference>
<dbReference type="RefSeq" id="WP_020912440.1">
    <property type="nucleotide sequence ID" value="NC_011566.1"/>
</dbReference>
<dbReference type="SMR" id="B8CNW1"/>
<dbReference type="STRING" id="225849.swp_2335"/>
<dbReference type="KEGG" id="swp:swp_2335"/>
<dbReference type="eggNOG" id="COG2022">
    <property type="taxonomic scope" value="Bacteria"/>
</dbReference>
<dbReference type="HOGENOM" id="CLU_062233_1_0_6"/>
<dbReference type="OrthoDB" id="9805935at2"/>
<dbReference type="UniPathway" id="UPA00060"/>
<dbReference type="Proteomes" id="UP000000753">
    <property type="component" value="Chromosome"/>
</dbReference>
<dbReference type="GO" id="GO:0005737">
    <property type="term" value="C:cytoplasm"/>
    <property type="evidence" value="ECO:0007669"/>
    <property type="project" value="UniProtKB-SubCell"/>
</dbReference>
<dbReference type="GO" id="GO:1990107">
    <property type="term" value="F:thiazole synthase activity"/>
    <property type="evidence" value="ECO:0007669"/>
    <property type="project" value="UniProtKB-EC"/>
</dbReference>
<dbReference type="GO" id="GO:0009229">
    <property type="term" value="P:thiamine diphosphate biosynthetic process"/>
    <property type="evidence" value="ECO:0007669"/>
    <property type="project" value="UniProtKB-UniRule"/>
</dbReference>
<dbReference type="CDD" id="cd04728">
    <property type="entry name" value="ThiG"/>
    <property type="match status" value="1"/>
</dbReference>
<dbReference type="FunFam" id="3.20.20.70:FF:000049">
    <property type="entry name" value="Thiazole synthase"/>
    <property type="match status" value="1"/>
</dbReference>
<dbReference type="Gene3D" id="3.20.20.70">
    <property type="entry name" value="Aldolase class I"/>
    <property type="match status" value="1"/>
</dbReference>
<dbReference type="HAMAP" id="MF_00443">
    <property type="entry name" value="ThiG"/>
    <property type="match status" value="1"/>
</dbReference>
<dbReference type="InterPro" id="IPR013785">
    <property type="entry name" value="Aldolase_TIM"/>
</dbReference>
<dbReference type="InterPro" id="IPR033983">
    <property type="entry name" value="Thiazole_synthase_ThiG"/>
</dbReference>
<dbReference type="InterPro" id="IPR008867">
    <property type="entry name" value="ThiG"/>
</dbReference>
<dbReference type="PANTHER" id="PTHR34266">
    <property type="entry name" value="THIAZOLE SYNTHASE"/>
    <property type="match status" value="1"/>
</dbReference>
<dbReference type="PANTHER" id="PTHR34266:SF2">
    <property type="entry name" value="THIAZOLE SYNTHASE"/>
    <property type="match status" value="1"/>
</dbReference>
<dbReference type="Pfam" id="PF05690">
    <property type="entry name" value="ThiG"/>
    <property type="match status" value="1"/>
</dbReference>
<dbReference type="SUPFAM" id="SSF110399">
    <property type="entry name" value="ThiG-like"/>
    <property type="match status" value="1"/>
</dbReference>
<name>THIG_SHEPW</name>